<reference key="1">
    <citation type="journal article" date="2005" name="J. Bacteriol.">
        <title>Whole-genome sequencing of Staphylococcus haemolyticus uncovers the extreme plasticity of its genome and the evolution of human-colonizing staphylococcal species.</title>
        <authorList>
            <person name="Takeuchi F."/>
            <person name="Watanabe S."/>
            <person name="Baba T."/>
            <person name="Yuzawa H."/>
            <person name="Ito T."/>
            <person name="Morimoto Y."/>
            <person name="Kuroda M."/>
            <person name="Cui L."/>
            <person name="Takahashi M."/>
            <person name="Ankai A."/>
            <person name="Baba S."/>
            <person name="Fukui S."/>
            <person name="Lee J.C."/>
            <person name="Hiramatsu K."/>
        </authorList>
    </citation>
    <scope>NUCLEOTIDE SEQUENCE [LARGE SCALE GENOMIC DNA]</scope>
    <source>
        <strain>JCSC1435</strain>
    </source>
</reference>
<protein>
    <recommendedName>
        <fullName evidence="1">1-pyrroline-5-carboxylate dehydrogenase</fullName>
        <shortName evidence="1">P5C dehydrogenase</shortName>
        <ecNumber evidence="1">1.2.1.88</ecNumber>
    </recommendedName>
    <alternativeName>
        <fullName evidence="1">L-glutamate gamma-semialdehyde dehydrogenase</fullName>
    </alternativeName>
</protein>
<keyword id="KW-0520">NAD</keyword>
<keyword id="KW-0560">Oxidoreductase</keyword>
<feature type="chain" id="PRO_0000056522" description="1-pyrroline-5-carboxylate dehydrogenase">
    <location>
        <begin position="1"/>
        <end position="514"/>
    </location>
</feature>
<feature type="active site" evidence="1">
    <location>
        <position position="286"/>
    </location>
</feature>
<feature type="active site" evidence="1">
    <location>
        <position position="320"/>
    </location>
</feature>
<accession>Q4L966</accession>
<gene>
    <name evidence="1" type="primary">rocA</name>
    <name type="ordered locus">SH0500</name>
</gene>
<dbReference type="EC" id="1.2.1.88" evidence="1"/>
<dbReference type="EMBL" id="AP006716">
    <property type="protein sequence ID" value="BAE03809.1"/>
    <property type="molecule type" value="Genomic_DNA"/>
</dbReference>
<dbReference type="SMR" id="Q4L966"/>
<dbReference type="KEGG" id="sha:SH0500"/>
<dbReference type="eggNOG" id="COG1012">
    <property type="taxonomic scope" value="Bacteria"/>
</dbReference>
<dbReference type="HOGENOM" id="CLU_005391_0_0_9"/>
<dbReference type="OrthoDB" id="9762913at2"/>
<dbReference type="UniPathway" id="UPA00261">
    <property type="reaction ID" value="UER00374"/>
</dbReference>
<dbReference type="Proteomes" id="UP000000543">
    <property type="component" value="Chromosome"/>
</dbReference>
<dbReference type="GO" id="GO:0009898">
    <property type="term" value="C:cytoplasmic side of plasma membrane"/>
    <property type="evidence" value="ECO:0007669"/>
    <property type="project" value="TreeGrafter"/>
</dbReference>
<dbReference type="GO" id="GO:0003842">
    <property type="term" value="F:1-pyrroline-5-carboxylate dehydrogenase activity"/>
    <property type="evidence" value="ECO:0007669"/>
    <property type="project" value="UniProtKB-UniRule"/>
</dbReference>
<dbReference type="GO" id="GO:0006537">
    <property type="term" value="P:glutamate biosynthetic process"/>
    <property type="evidence" value="ECO:0007669"/>
    <property type="project" value="UniProtKB-UniRule"/>
</dbReference>
<dbReference type="GO" id="GO:0010133">
    <property type="term" value="P:proline catabolic process to glutamate"/>
    <property type="evidence" value="ECO:0007669"/>
    <property type="project" value="UniProtKB-UniPathway"/>
</dbReference>
<dbReference type="CDD" id="cd07124">
    <property type="entry name" value="ALDH_PutA-P5CDH-RocA"/>
    <property type="match status" value="1"/>
</dbReference>
<dbReference type="FunFam" id="3.40.309.10:FF:000005">
    <property type="entry name" value="1-pyrroline-5-carboxylate dehydrogenase 1"/>
    <property type="match status" value="1"/>
</dbReference>
<dbReference type="FunFam" id="3.40.605.10:FF:000045">
    <property type="entry name" value="1-pyrroline-5-carboxylate dehydrogenase 1"/>
    <property type="match status" value="1"/>
</dbReference>
<dbReference type="Gene3D" id="3.40.605.10">
    <property type="entry name" value="Aldehyde Dehydrogenase, Chain A, domain 1"/>
    <property type="match status" value="1"/>
</dbReference>
<dbReference type="Gene3D" id="3.40.309.10">
    <property type="entry name" value="Aldehyde Dehydrogenase, Chain A, domain 2"/>
    <property type="match status" value="1"/>
</dbReference>
<dbReference type="HAMAP" id="MF_00733">
    <property type="entry name" value="RocA"/>
    <property type="match status" value="1"/>
</dbReference>
<dbReference type="InterPro" id="IPR016161">
    <property type="entry name" value="Ald_DH/histidinol_DH"/>
</dbReference>
<dbReference type="InterPro" id="IPR016163">
    <property type="entry name" value="Ald_DH_C"/>
</dbReference>
<dbReference type="InterPro" id="IPR016160">
    <property type="entry name" value="Ald_DH_CS_CYS"/>
</dbReference>
<dbReference type="InterPro" id="IPR029510">
    <property type="entry name" value="Ald_DH_CS_GLU"/>
</dbReference>
<dbReference type="InterPro" id="IPR016162">
    <property type="entry name" value="Ald_DH_N"/>
</dbReference>
<dbReference type="InterPro" id="IPR015590">
    <property type="entry name" value="Aldehyde_DH_dom"/>
</dbReference>
<dbReference type="InterPro" id="IPR050485">
    <property type="entry name" value="Proline_metab_enzyme"/>
</dbReference>
<dbReference type="InterPro" id="IPR005932">
    <property type="entry name" value="RocA"/>
</dbReference>
<dbReference type="InterPro" id="IPR047597">
    <property type="entry name" value="RocA_bacillales"/>
</dbReference>
<dbReference type="NCBIfam" id="TIGR01237">
    <property type="entry name" value="D1pyr5carbox2"/>
    <property type="match status" value="1"/>
</dbReference>
<dbReference type="NCBIfam" id="NF002852">
    <property type="entry name" value="PRK03137.1"/>
    <property type="match status" value="1"/>
</dbReference>
<dbReference type="PANTHER" id="PTHR42862">
    <property type="entry name" value="DELTA-1-PYRROLINE-5-CARBOXYLATE DEHYDROGENASE 1, ISOFORM A-RELATED"/>
    <property type="match status" value="1"/>
</dbReference>
<dbReference type="PANTHER" id="PTHR42862:SF1">
    <property type="entry name" value="DELTA-1-PYRROLINE-5-CARBOXYLATE DEHYDROGENASE 2, ISOFORM A-RELATED"/>
    <property type="match status" value="1"/>
</dbReference>
<dbReference type="Pfam" id="PF00171">
    <property type="entry name" value="Aldedh"/>
    <property type="match status" value="1"/>
</dbReference>
<dbReference type="SUPFAM" id="SSF53720">
    <property type="entry name" value="ALDH-like"/>
    <property type="match status" value="1"/>
</dbReference>
<dbReference type="PROSITE" id="PS00070">
    <property type="entry name" value="ALDEHYDE_DEHYDR_CYS"/>
    <property type="match status" value="1"/>
</dbReference>
<dbReference type="PROSITE" id="PS00687">
    <property type="entry name" value="ALDEHYDE_DEHYDR_GLU"/>
    <property type="match status" value="1"/>
</dbReference>
<evidence type="ECO:0000255" key="1">
    <source>
        <dbReference type="HAMAP-Rule" id="MF_00733"/>
    </source>
</evidence>
<comment type="catalytic activity">
    <reaction evidence="1">
        <text>L-glutamate 5-semialdehyde + NAD(+) + H2O = L-glutamate + NADH + 2 H(+)</text>
        <dbReference type="Rhea" id="RHEA:30235"/>
        <dbReference type="ChEBI" id="CHEBI:15377"/>
        <dbReference type="ChEBI" id="CHEBI:15378"/>
        <dbReference type="ChEBI" id="CHEBI:29985"/>
        <dbReference type="ChEBI" id="CHEBI:57540"/>
        <dbReference type="ChEBI" id="CHEBI:57945"/>
        <dbReference type="ChEBI" id="CHEBI:58066"/>
        <dbReference type="EC" id="1.2.1.88"/>
    </reaction>
</comment>
<comment type="pathway">
    <text evidence="1">Amino-acid degradation; L-proline degradation into L-glutamate; L-glutamate from L-proline: step 2/2.</text>
</comment>
<comment type="similarity">
    <text evidence="1">Belongs to the aldehyde dehydrogenase family. RocA subfamily.</text>
</comment>
<name>ROCA_STAHJ</name>
<sequence length="514" mass="56597">MVVPFKNEPGIDFSVQENVERFQKTLEQVKNELGQTLPIVIDGEHITKDDTFDSINPANTSELIAKVSKATKEDVDKAFESSNKAYKAWRQWSHKDRAELLLRVAAIIRRRKEEISAVMVYEAGKPWDEAVGDAAEGIDFIEYYARSMMELADGKPVLDREGEHNKYFYKSIGTGVTIPPWNFPFAIMAGTTLAPVVAGNTVLLKPAEDTVLTAYKLIEILEEAGLPKGVVNFVPGDPKEIGDYLVDSVHTHFVTFTGSRATGTRIYERSAVVQEGQTFLKRVIAEMGGKDAIVVDENIDTDLAAESIITSAFGFSGQKCSACSRAIVHSSVYDEVLEKAVALTKELTVGNTVDNTFMGPVINKKQFDKIKKYIEIGGKEGKIEIGGEADDSTGYFIKPTIISGLKSSDQVMQEEIFGPVVGFTKFDNFEEAIEIANDTDYGLTGAVITNNRENWIKAVNEFDVGNLYLNRGCTAAVVGYHPFGGFKMSGTDAKTGSPDYLLNFLEQKVVSEMF</sequence>
<proteinExistence type="inferred from homology"/>
<organism>
    <name type="scientific">Staphylococcus haemolyticus (strain JCSC1435)</name>
    <dbReference type="NCBI Taxonomy" id="279808"/>
    <lineage>
        <taxon>Bacteria</taxon>
        <taxon>Bacillati</taxon>
        <taxon>Bacillota</taxon>
        <taxon>Bacilli</taxon>
        <taxon>Bacillales</taxon>
        <taxon>Staphylococcaceae</taxon>
        <taxon>Staphylococcus</taxon>
    </lineage>
</organism>